<evidence type="ECO:0000255" key="1">
    <source>
        <dbReference type="HAMAP-Rule" id="MF_01635"/>
    </source>
</evidence>
<name>UBIA_COXBR</name>
<reference key="1">
    <citation type="submission" date="2007-11" db="EMBL/GenBank/DDBJ databases">
        <title>Genome sequencing of phylogenetically and phenotypically diverse Coxiella burnetii isolates.</title>
        <authorList>
            <person name="Seshadri R."/>
            <person name="Samuel J.E."/>
        </authorList>
    </citation>
    <scope>NUCLEOTIDE SEQUENCE [LARGE SCALE GENOMIC DNA]</scope>
    <source>
        <strain>RSA 331 / Henzerling II</strain>
    </source>
</reference>
<gene>
    <name evidence="1" type="primary">ubiA</name>
    <name type="ordered locus">COXBURSA331_A0140</name>
</gene>
<feature type="chain" id="PRO_1000088172" description="4-hydroxybenzoate octaprenyltransferase">
    <location>
        <begin position="1"/>
        <end position="287"/>
    </location>
</feature>
<feature type="transmembrane region" description="Helical" evidence="1">
    <location>
        <begin position="21"/>
        <end position="41"/>
    </location>
</feature>
<feature type="transmembrane region" description="Helical" evidence="1">
    <location>
        <begin position="44"/>
        <end position="64"/>
    </location>
</feature>
<feature type="transmembrane region" description="Helical" evidence="1">
    <location>
        <begin position="91"/>
        <end position="111"/>
    </location>
</feature>
<feature type="transmembrane region" description="Helical" evidence="1">
    <location>
        <begin position="112"/>
        <end position="132"/>
    </location>
</feature>
<feature type="transmembrane region" description="Helical" evidence="1">
    <location>
        <begin position="139"/>
        <end position="159"/>
    </location>
</feature>
<feature type="transmembrane region" description="Helical" evidence="1">
    <location>
        <begin position="160"/>
        <end position="180"/>
    </location>
</feature>
<feature type="transmembrane region" description="Helical" evidence="1">
    <location>
        <begin position="211"/>
        <end position="231"/>
    </location>
</feature>
<feature type="transmembrane region" description="Helical" evidence="1">
    <location>
        <begin position="235"/>
        <end position="255"/>
    </location>
</feature>
<feature type="transmembrane region" description="Helical" evidence="1">
    <location>
        <begin position="263"/>
        <end position="283"/>
    </location>
</feature>
<accession>A9N9X0</accession>
<organism>
    <name type="scientific">Coxiella burnetii (strain RSA 331 / Henzerling II)</name>
    <dbReference type="NCBI Taxonomy" id="360115"/>
    <lineage>
        <taxon>Bacteria</taxon>
        <taxon>Pseudomonadati</taxon>
        <taxon>Pseudomonadota</taxon>
        <taxon>Gammaproteobacteria</taxon>
        <taxon>Legionellales</taxon>
        <taxon>Coxiellaceae</taxon>
        <taxon>Coxiella</taxon>
    </lineage>
</organism>
<proteinExistence type="inferred from homology"/>
<keyword id="KW-0997">Cell inner membrane</keyword>
<keyword id="KW-1003">Cell membrane</keyword>
<keyword id="KW-0460">Magnesium</keyword>
<keyword id="KW-0472">Membrane</keyword>
<keyword id="KW-0808">Transferase</keyword>
<keyword id="KW-0812">Transmembrane</keyword>
<keyword id="KW-1133">Transmembrane helix</keyword>
<keyword id="KW-0831">Ubiquinone biosynthesis</keyword>
<comment type="function">
    <text evidence="1">Catalyzes the prenylation of para-hydroxybenzoate (PHB) with an all-trans polyprenyl group. Mediates the second step in the final reaction sequence of ubiquinone-8 (UQ-8) biosynthesis, which is the condensation of the polyisoprenoid side chain with PHB, generating the first membrane-bound Q intermediate 3-octaprenyl-4-hydroxybenzoate.</text>
</comment>
<comment type="catalytic activity">
    <reaction evidence="1">
        <text>all-trans-octaprenyl diphosphate + 4-hydroxybenzoate = 4-hydroxy-3-(all-trans-octaprenyl)benzoate + diphosphate</text>
        <dbReference type="Rhea" id="RHEA:27782"/>
        <dbReference type="ChEBI" id="CHEBI:1617"/>
        <dbReference type="ChEBI" id="CHEBI:17879"/>
        <dbReference type="ChEBI" id="CHEBI:33019"/>
        <dbReference type="ChEBI" id="CHEBI:57711"/>
        <dbReference type="EC" id="2.5.1.39"/>
    </reaction>
</comment>
<comment type="cofactor">
    <cofactor evidence="1">
        <name>Mg(2+)</name>
        <dbReference type="ChEBI" id="CHEBI:18420"/>
    </cofactor>
</comment>
<comment type="pathway">
    <text evidence="1">Cofactor biosynthesis; ubiquinone biosynthesis.</text>
</comment>
<comment type="subcellular location">
    <subcellularLocation>
        <location evidence="1">Cell inner membrane</location>
        <topology evidence="1">Multi-pass membrane protein</topology>
    </subcellularLocation>
</comment>
<comment type="similarity">
    <text evidence="1">Belongs to the UbiA prenyltransferase family.</text>
</comment>
<dbReference type="EC" id="2.5.1.39" evidence="1"/>
<dbReference type="EMBL" id="CP000890">
    <property type="protein sequence ID" value="ABX78874.1"/>
    <property type="molecule type" value="Genomic_DNA"/>
</dbReference>
<dbReference type="RefSeq" id="WP_012220068.1">
    <property type="nucleotide sequence ID" value="NC_010117.1"/>
</dbReference>
<dbReference type="SMR" id="A9N9X0"/>
<dbReference type="KEGG" id="cbs:COXBURSA331_A0140"/>
<dbReference type="HOGENOM" id="CLU_034879_1_0_6"/>
<dbReference type="UniPathway" id="UPA00232"/>
<dbReference type="GO" id="GO:0005886">
    <property type="term" value="C:plasma membrane"/>
    <property type="evidence" value="ECO:0007669"/>
    <property type="project" value="UniProtKB-SubCell"/>
</dbReference>
<dbReference type="GO" id="GO:0008412">
    <property type="term" value="F:4-hydroxybenzoate polyprenyltransferase activity"/>
    <property type="evidence" value="ECO:0007669"/>
    <property type="project" value="UniProtKB-UniRule"/>
</dbReference>
<dbReference type="GO" id="GO:0006744">
    <property type="term" value="P:ubiquinone biosynthetic process"/>
    <property type="evidence" value="ECO:0007669"/>
    <property type="project" value="UniProtKB-UniRule"/>
</dbReference>
<dbReference type="CDD" id="cd13959">
    <property type="entry name" value="PT_UbiA_COQ2"/>
    <property type="match status" value="1"/>
</dbReference>
<dbReference type="FunFam" id="1.10.357.140:FF:000002">
    <property type="entry name" value="4-hydroxybenzoate octaprenyltransferase"/>
    <property type="match status" value="1"/>
</dbReference>
<dbReference type="FunFam" id="1.20.120.1780:FF:000001">
    <property type="entry name" value="4-hydroxybenzoate octaprenyltransferase"/>
    <property type="match status" value="1"/>
</dbReference>
<dbReference type="Gene3D" id="1.10.357.140">
    <property type="entry name" value="UbiA prenyltransferase"/>
    <property type="match status" value="1"/>
</dbReference>
<dbReference type="Gene3D" id="1.20.120.1780">
    <property type="entry name" value="UbiA prenyltransferase"/>
    <property type="match status" value="1"/>
</dbReference>
<dbReference type="HAMAP" id="MF_01635">
    <property type="entry name" value="UbiA"/>
    <property type="match status" value="1"/>
</dbReference>
<dbReference type="InterPro" id="IPR006370">
    <property type="entry name" value="HB_polyprenyltransferase-like"/>
</dbReference>
<dbReference type="InterPro" id="IPR039653">
    <property type="entry name" value="Prenyltransferase"/>
</dbReference>
<dbReference type="InterPro" id="IPR000537">
    <property type="entry name" value="UbiA_prenyltransferase"/>
</dbReference>
<dbReference type="InterPro" id="IPR030470">
    <property type="entry name" value="UbiA_prenylTrfase_CS"/>
</dbReference>
<dbReference type="InterPro" id="IPR044878">
    <property type="entry name" value="UbiA_sf"/>
</dbReference>
<dbReference type="NCBIfam" id="TIGR01474">
    <property type="entry name" value="ubiA_proteo"/>
    <property type="match status" value="1"/>
</dbReference>
<dbReference type="PANTHER" id="PTHR11048:SF28">
    <property type="entry name" value="4-HYDROXYBENZOATE POLYPRENYLTRANSFERASE, MITOCHONDRIAL"/>
    <property type="match status" value="1"/>
</dbReference>
<dbReference type="PANTHER" id="PTHR11048">
    <property type="entry name" value="PRENYLTRANSFERASES"/>
    <property type="match status" value="1"/>
</dbReference>
<dbReference type="Pfam" id="PF01040">
    <property type="entry name" value="UbiA"/>
    <property type="match status" value="1"/>
</dbReference>
<dbReference type="PROSITE" id="PS00943">
    <property type="entry name" value="UBIA"/>
    <property type="match status" value="1"/>
</dbReference>
<sequence length="287" mass="32712">MINLRQQMPHYLRLMRFDKPVGIFLLLWPTLWAVWIAAKGAPSFKIAVIFIAGSVVMRAAGCIVNDFADRHLDKHVQRTQMRPLASGSVSVTEAMLLFAVLSLIAFTLVLLLNRLTVELAVIGILLALVYPFLKRFTHLPQLWLGVAFSWSIPMAFAATVGHVPAVAWLLFFAAVLWPIVYDTQYAMIDREDDVKVGIKSTAILFGRYDRLMIGLLQGSVLLTFGLLGWYLRFNYWFYLGLLVALGLMCYQQFLIRHRKPPDCFAAFRNNNWVGFFIFLGILLTHRN</sequence>
<protein>
    <recommendedName>
        <fullName evidence="1">4-hydroxybenzoate octaprenyltransferase</fullName>
        <ecNumber evidence="1">2.5.1.39</ecNumber>
    </recommendedName>
    <alternativeName>
        <fullName evidence="1">4-HB polyprenyltransferase</fullName>
    </alternativeName>
</protein>